<sequence>MAGGHVAHLVYKGPSVVKELVIGFSLGLVAGGFWKMHHWNSQRRTKEFYDMLEKGQISVVADEE</sequence>
<gene>
    <name type="primary">COX5C</name>
    <name type="synonym">COXVC</name>
</gene>
<name>COX5C_IPOBA</name>
<comment type="function">
    <text>This protein is one of the nuclear-coded polypeptide chains of cytochrome c oxidase, the terminal oxidase in mitochondrial electron transport.</text>
</comment>
<comment type="subunit">
    <text>Sweet potato cytochrome C oxidase consists of at least seven different polypeptides species, subunits I, II, III, IV, Va, Vb, and Vc in order of MW.</text>
</comment>
<comment type="subcellular location">
    <subcellularLocation>
        <location>Mitochondrion inner membrane</location>
    </subcellularLocation>
</comment>
<comment type="miscellaneous">
    <text>This precursor was imported into isolated sweet potato tuberous root mitochondria without any significant processing, the import being dependent on membrane potential.</text>
</comment>
<comment type="similarity">
    <text evidence="3">Belongs to the cytochrome c oxidase subunit 5C family.</text>
</comment>
<feature type="initiator methionine" description="Removed" evidence="2">
    <location>
        <position position="1"/>
    </location>
</feature>
<feature type="chain" id="PRO_0000128192" description="Cytochrome c oxidase subunit 5C">
    <location>
        <begin position="2"/>
        <end position="64"/>
    </location>
</feature>
<feature type="transmembrane region" description="Helical" evidence="1">
    <location>
        <begin position="16"/>
        <end position="34"/>
    </location>
</feature>
<reference key="1">
    <citation type="journal article" date="1990" name="Eur. J. Biochem.">
        <title>Molecular cloning of a cDNA for the smallest nuclear-encoded subunit of sweet potato cytochrome c oxidase. Analysis with the cDNA of the structure and import into mitochondria of the subunit.</title>
        <authorList>
            <person name="Nakagawa T."/>
            <person name="Maeshima M."/>
            <person name="Nakamura K."/>
            <person name="Asahi T."/>
        </authorList>
    </citation>
    <scope>NUCLEOTIDE SEQUENCE [MRNA]</scope>
    <source>
        <strain>cv. Kokei No. 14</strain>
        <tissue>Tuberous root</tissue>
    </source>
</reference>
<reference key="2">
    <citation type="journal article" date="1993" name="Plant Cell Physiol.">
        <title>The nuclear gene for subunit Vc of sweet potato cytochrome c oxidase.</title>
        <authorList>
            <person name="Nakagawa T."/>
            <person name="Maeshima M."/>
            <person name="Nakamura K."/>
            <person name="Asahi T."/>
        </authorList>
    </citation>
    <scope>NUCLEOTIDE SEQUENCE</scope>
    <source>
        <strain>cv. Kokei No. 14</strain>
    </source>
</reference>
<reference key="3">
    <citation type="journal article" date="1987" name="Eur. J. Biochem.">
        <title>Separation, amino-terminal sequence and cell-free synthesis of the smallest subunit of sweet potato cytochrome c oxidase.</title>
        <authorList>
            <person name="Nakagawa T."/>
            <person name="Maeshima M."/>
            <person name="Muto H."/>
            <person name="Kajiura H."/>
            <person name="Hattori H."/>
            <person name="Asahi T."/>
        </authorList>
    </citation>
    <scope>PROTEIN SEQUENCE OF 2-26</scope>
    <source>
        <strain>cv. Kokei No. 14</strain>
        <tissue>Tuberous root</tissue>
    </source>
</reference>
<dbReference type="EMBL" id="X53393">
    <property type="protein sequence ID" value="CAA37470.1"/>
    <property type="molecule type" value="mRNA"/>
</dbReference>
<dbReference type="EMBL" id="S73602">
    <property type="protein sequence ID" value="AAB31231.1"/>
    <property type="molecule type" value="Genomic_DNA"/>
</dbReference>
<dbReference type="PIR" id="S09297">
    <property type="entry name" value="S09297"/>
</dbReference>
<dbReference type="PIR" id="S11029">
    <property type="entry name" value="S11029"/>
</dbReference>
<dbReference type="SMR" id="P19173"/>
<dbReference type="GO" id="GO:0005743">
    <property type="term" value="C:mitochondrial inner membrane"/>
    <property type="evidence" value="ECO:0007669"/>
    <property type="project" value="UniProtKB-SubCell"/>
</dbReference>
<dbReference type="InterPro" id="IPR008432">
    <property type="entry name" value="COX5C"/>
</dbReference>
<dbReference type="PANTHER" id="PTHR34372">
    <property type="entry name" value="CYTOCHROME C OXIDASE SUBUNIT 5C-2-RELATED"/>
    <property type="match status" value="1"/>
</dbReference>
<dbReference type="PANTHER" id="PTHR34372:SF3">
    <property type="entry name" value="CYTOCHROME C OXIDASE SUBUNIT 5C-4-RELATED"/>
    <property type="match status" value="1"/>
</dbReference>
<dbReference type="PIRSF" id="PIRSF038131">
    <property type="entry name" value="COX5C"/>
    <property type="match status" value="1"/>
</dbReference>
<accession>P19173</accession>
<organism>
    <name type="scientific">Ipomoea batatas</name>
    <name type="common">Sweet potato</name>
    <name type="synonym">Convolvulus batatas</name>
    <dbReference type="NCBI Taxonomy" id="4120"/>
    <lineage>
        <taxon>Eukaryota</taxon>
        <taxon>Viridiplantae</taxon>
        <taxon>Streptophyta</taxon>
        <taxon>Embryophyta</taxon>
        <taxon>Tracheophyta</taxon>
        <taxon>Spermatophyta</taxon>
        <taxon>Magnoliopsida</taxon>
        <taxon>eudicotyledons</taxon>
        <taxon>Gunneridae</taxon>
        <taxon>Pentapetalae</taxon>
        <taxon>asterids</taxon>
        <taxon>lamiids</taxon>
        <taxon>Solanales</taxon>
        <taxon>Convolvulaceae</taxon>
        <taxon>Ipomoeeae</taxon>
        <taxon>Ipomoea</taxon>
    </lineage>
</organism>
<keyword id="KW-0903">Direct protein sequencing</keyword>
<keyword id="KW-0472">Membrane</keyword>
<keyword id="KW-0496">Mitochondrion</keyword>
<keyword id="KW-0999">Mitochondrion inner membrane</keyword>
<keyword id="KW-0812">Transmembrane</keyword>
<keyword id="KW-1133">Transmembrane helix</keyword>
<protein>
    <recommendedName>
        <fullName>Cytochrome c oxidase subunit 5C</fullName>
    </recommendedName>
    <alternativeName>
        <fullName>Cytochrome c oxidase polypeptide Vc</fullName>
    </alternativeName>
</protein>
<evidence type="ECO:0000255" key="1"/>
<evidence type="ECO:0000269" key="2">
    <source>
    </source>
</evidence>
<evidence type="ECO:0000305" key="3"/>
<proteinExistence type="evidence at protein level"/>